<gene>
    <name evidence="1" type="primary">prsA</name>
    <name type="ordered locus">CLJ_B3868</name>
</gene>
<name>PRSA_CLOB6</name>
<proteinExistence type="inferred from homology"/>
<sequence>MKSAKKLLSVLCLGIFILTFTACDMVEKTPEAKAKSTIAKVNGEKIQRKDLDENPRFKQVVSQMKMQYGEEFEKSEQGKEVIKEQKSQILDELITEKILLQKGKELKVIPKDEELNKEADKKVNEIKAVYNNDEKKFEETLKSTGFTKETLKEYLKDQIVIEKVINEATKDVKVEDKDAQKYYNENQSMFTEKPNTMNVSHILVKTEDEAKKVKKRLDAKEDFAKVAKEVSQDTGSKDKGGLLGDINYNDANFDPTFMKAAMALKEGAISNPVHTQFGYHIIKINSKKEYPVKKFDAVKEDIKKQLKQEKQQEAYTKKIEEWKKASKIKTYEKNLL</sequence>
<organism>
    <name type="scientific">Clostridium botulinum (strain 657 / Type Ba4)</name>
    <dbReference type="NCBI Taxonomy" id="515621"/>
    <lineage>
        <taxon>Bacteria</taxon>
        <taxon>Bacillati</taxon>
        <taxon>Bacillota</taxon>
        <taxon>Clostridia</taxon>
        <taxon>Eubacteriales</taxon>
        <taxon>Clostridiaceae</taxon>
        <taxon>Clostridium</taxon>
    </lineage>
</organism>
<keyword id="KW-1003">Cell membrane</keyword>
<keyword id="KW-0413">Isomerase</keyword>
<keyword id="KW-0449">Lipoprotein</keyword>
<keyword id="KW-0472">Membrane</keyword>
<keyword id="KW-0564">Palmitate</keyword>
<keyword id="KW-0697">Rotamase</keyword>
<keyword id="KW-0732">Signal</keyword>
<protein>
    <recommendedName>
        <fullName evidence="1">Foldase protein PrsA</fullName>
        <ecNumber evidence="1">5.2.1.8</ecNumber>
    </recommendedName>
</protein>
<accession>C3KW94</accession>
<feature type="signal peptide" evidence="1">
    <location>
        <begin position="1"/>
        <end position="22"/>
    </location>
</feature>
<feature type="chain" id="PRO_1000213647" description="Foldase protein PrsA">
    <location>
        <begin position="23"/>
        <end position="336"/>
    </location>
</feature>
<feature type="domain" description="PpiC" evidence="1">
    <location>
        <begin position="194"/>
        <end position="286"/>
    </location>
</feature>
<feature type="lipid moiety-binding region" description="N-palmitoyl cysteine" evidence="1">
    <location>
        <position position="23"/>
    </location>
</feature>
<feature type="lipid moiety-binding region" description="S-diacylglycerol cysteine" evidence="1">
    <location>
        <position position="23"/>
    </location>
</feature>
<reference key="1">
    <citation type="submission" date="2008-05" db="EMBL/GenBank/DDBJ databases">
        <title>Genome sequence of Clostridium botulinum Ba4 strain 657.</title>
        <authorList>
            <person name="Shrivastava S."/>
            <person name="Brown J.L."/>
            <person name="Bruce D."/>
            <person name="Detter C."/>
            <person name="Munk C."/>
            <person name="Smith L.A."/>
            <person name="Smith T.J."/>
            <person name="Sutton G."/>
            <person name="Brettin T.S."/>
        </authorList>
    </citation>
    <scope>NUCLEOTIDE SEQUENCE [LARGE SCALE GENOMIC DNA]</scope>
    <source>
        <strain>657 / Type Ba4</strain>
    </source>
</reference>
<dbReference type="EC" id="5.2.1.8" evidence="1"/>
<dbReference type="EMBL" id="CP001083">
    <property type="protein sequence ID" value="ACQ51889.1"/>
    <property type="molecule type" value="Genomic_DNA"/>
</dbReference>
<dbReference type="RefSeq" id="WP_003361726.1">
    <property type="nucleotide sequence ID" value="NC_012658.1"/>
</dbReference>
<dbReference type="SMR" id="C3KW94"/>
<dbReference type="KEGG" id="cbi:CLJ_B3868"/>
<dbReference type="HOGENOM" id="CLU_034646_5_2_9"/>
<dbReference type="Proteomes" id="UP000002333">
    <property type="component" value="Chromosome"/>
</dbReference>
<dbReference type="GO" id="GO:0005886">
    <property type="term" value="C:plasma membrane"/>
    <property type="evidence" value="ECO:0007669"/>
    <property type="project" value="UniProtKB-SubCell"/>
</dbReference>
<dbReference type="GO" id="GO:0003755">
    <property type="term" value="F:peptidyl-prolyl cis-trans isomerase activity"/>
    <property type="evidence" value="ECO:0007669"/>
    <property type="project" value="UniProtKB-UniRule"/>
</dbReference>
<dbReference type="GO" id="GO:0006457">
    <property type="term" value="P:protein folding"/>
    <property type="evidence" value="ECO:0007669"/>
    <property type="project" value="UniProtKB-UniRule"/>
</dbReference>
<dbReference type="Gene3D" id="3.10.50.40">
    <property type="match status" value="1"/>
</dbReference>
<dbReference type="Gene3D" id="1.10.4030.10">
    <property type="entry name" value="Porin chaperone SurA, peptide-binding domain"/>
    <property type="match status" value="1"/>
</dbReference>
<dbReference type="HAMAP" id="MF_01145">
    <property type="entry name" value="Foldase_PrsA"/>
    <property type="match status" value="1"/>
</dbReference>
<dbReference type="InterPro" id="IPR023059">
    <property type="entry name" value="Foldase_PrsA"/>
</dbReference>
<dbReference type="InterPro" id="IPR046357">
    <property type="entry name" value="PPIase_dom_sf"/>
</dbReference>
<dbReference type="InterPro" id="IPR000297">
    <property type="entry name" value="PPIase_PpiC"/>
</dbReference>
<dbReference type="InterPro" id="IPR023058">
    <property type="entry name" value="PPIase_PpiC_CS"/>
</dbReference>
<dbReference type="InterPro" id="IPR050245">
    <property type="entry name" value="PrsA_foldase"/>
</dbReference>
<dbReference type="InterPro" id="IPR027304">
    <property type="entry name" value="Trigger_fact/SurA_dom_sf"/>
</dbReference>
<dbReference type="NCBIfam" id="NF000809">
    <property type="entry name" value="PRK00059.1"/>
    <property type="match status" value="1"/>
</dbReference>
<dbReference type="PANTHER" id="PTHR47245:SF1">
    <property type="entry name" value="FOLDASE PROTEIN PRSA"/>
    <property type="match status" value="1"/>
</dbReference>
<dbReference type="PANTHER" id="PTHR47245">
    <property type="entry name" value="PEPTIDYLPROLYL ISOMERASE"/>
    <property type="match status" value="1"/>
</dbReference>
<dbReference type="Pfam" id="PF13145">
    <property type="entry name" value="Rotamase_2"/>
    <property type="match status" value="1"/>
</dbReference>
<dbReference type="Pfam" id="PF13624">
    <property type="entry name" value="SurA_N_3"/>
    <property type="match status" value="1"/>
</dbReference>
<dbReference type="SUPFAM" id="SSF54534">
    <property type="entry name" value="FKBP-like"/>
    <property type="match status" value="1"/>
</dbReference>
<dbReference type="SUPFAM" id="SSF109998">
    <property type="entry name" value="Triger factor/SurA peptide-binding domain-like"/>
    <property type="match status" value="1"/>
</dbReference>
<dbReference type="PROSITE" id="PS01096">
    <property type="entry name" value="PPIC_PPIASE_1"/>
    <property type="match status" value="1"/>
</dbReference>
<dbReference type="PROSITE" id="PS50198">
    <property type="entry name" value="PPIC_PPIASE_2"/>
    <property type="match status" value="1"/>
</dbReference>
<dbReference type="PROSITE" id="PS51257">
    <property type="entry name" value="PROKAR_LIPOPROTEIN"/>
    <property type="match status" value="1"/>
</dbReference>
<comment type="function">
    <text evidence="1">Plays a major role in protein secretion by helping the post-translocational extracellular folding of several secreted proteins.</text>
</comment>
<comment type="catalytic activity">
    <reaction evidence="1">
        <text>[protein]-peptidylproline (omega=180) = [protein]-peptidylproline (omega=0)</text>
        <dbReference type="Rhea" id="RHEA:16237"/>
        <dbReference type="Rhea" id="RHEA-COMP:10747"/>
        <dbReference type="Rhea" id="RHEA-COMP:10748"/>
        <dbReference type="ChEBI" id="CHEBI:83833"/>
        <dbReference type="ChEBI" id="CHEBI:83834"/>
        <dbReference type="EC" id="5.2.1.8"/>
    </reaction>
</comment>
<comment type="subcellular location">
    <subcellularLocation>
        <location evidence="1">Cell membrane</location>
        <topology evidence="1">Lipid-anchor</topology>
    </subcellularLocation>
</comment>
<comment type="similarity">
    <text evidence="1">Belongs to the PrsA family.</text>
</comment>
<evidence type="ECO:0000255" key="1">
    <source>
        <dbReference type="HAMAP-Rule" id="MF_01145"/>
    </source>
</evidence>